<proteinExistence type="inferred from homology"/>
<sequence length="132" mass="14419">MSMSDPLGDMLTRIRNALARKKGKLVTPASKLRACVLDVLQSEGYIRGYNQVDLGDGKSEIEIELKYFEGLAAIRELSRVSKPGRRVYVSAKSLPQVANGLGVSILSTPKGIMADHEAREQNVGGELLCRVF</sequence>
<reference key="1">
    <citation type="journal article" date="2004" name="Proc. Natl. Acad. Sci. U.S.A.">
        <title>The louse-borne human pathogen Bartonella quintana is a genomic derivative of the zoonotic agent Bartonella henselae.</title>
        <authorList>
            <person name="Alsmark U.C.M."/>
            <person name="Frank A.C."/>
            <person name="Karlberg E.O."/>
            <person name="Legault B.-A."/>
            <person name="Ardell D.H."/>
            <person name="Canbaeck B."/>
            <person name="Eriksson A.-S."/>
            <person name="Naeslund A.K."/>
            <person name="Handley S.A."/>
            <person name="Huvet M."/>
            <person name="La Scola B."/>
            <person name="Holmberg M."/>
            <person name="Andersson S.G.E."/>
        </authorList>
    </citation>
    <scope>NUCLEOTIDE SEQUENCE [LARGE SCALE GENOMIC DNA]</scope>
    <source>
        <strain>Toulouse</strain>
    </source>
</reference>
<comment type="function">
    <text evidence="1">One of the primary rRNA binding proteins, it binds directly to 16S rRNA central domain where it helps coordinate assembly of the platform of the 30S subunit.</text>
</comment>
<comment type="subunit">
    <text evidence="1">Part of the 30S ribosomal subunit. Contacts proteins S5 and S12.</text>
</comment>
<comment type="similarity">
    <text evidence="1">Belongs to the universal ribosomal protein uS8 family.</text>
</comment>
<organism>
    <name type="scientific">Bartonella quintana (strain Toulouse)</name>
    <name type="common">Rochalimaea quintana</name>
    <dbReference type="NCBI Taxonomy" id="283165"/>
    <lineage>
        <taxon>Bacteria</taxon>
        <taxon>Pseudomonadati</taxon>
        <taxon>Pseudomonadota</taxon>
        <taxon>Alphaproteobacteria</taxon>
        <taxon>Hyphomicrobiales</taxon>
        <taxon>Bartonellaceae</taxon>
        <taxon>Bartonella</taxon>
    </lineage>
</organism>
<evidence type="ECO:0000255" key="1">
    <source>
        <dbReference type="HAMAP-Rule" id="MF_01302"/>
    </source>
</evidence>
<evidence type="ECO:0000305" key="2"/>
<protein>
    <recommendedName>
        <fullName evidence="1">Small ribosomal subunit protein uS8</fullName>
    </recommendedName>
    <alternativeName>
        <fullName evidence="2">30S ribosomal protein S8</fullName>
    </alternativeName>
</protein>
<accession>Q6FZD6</accession>
<dbReference type="EMBL" id="BX897700">
    <property type="protein sequence ID" value="CAF26292.1"/>
    <property type="molecule type" value="Genomic_DNA"/>
</dbReference>
<dbReference type="RefSeq" id="WP_011179539.1">
    <property type="nucleotide sequence ID" value="NC_005955.1"/>
</dbReference>
<dbReference type="SMR" id="Q6FZD6"/>
<dbReference type="KEGG" id="bqu:BQ08090"/>
<dbReference type="eggNOG" id="COG0096">
    <property type="taxonomic scope" value="Bacteria"/>
</dbReference>
<dbReference type="HOGENOM" id="CLU_098428_0_0_5"/>
<dbReference type="OrthoDB" id="9802617at2"/>
<dbReference type="Proteomes" id="UP000000597">
    <property type="component" value="Chromosome"/>
</dbReference>
<dbReference type="GO" id="GO:1990904">
    <property type="term" value="C:ribonucleoprotein complex"/>
    <property type="evidence" value="ECO:0007669"/>
    <property type="project" value="UniProtKB-KW"/>
</dbReference>
<dbReference type="GO" id="GO:0005840">
    <property type="term" value="C:ribosome"/>
    <property type="evidence" value="ECO:0007669"/>
    <property type="project" value="UniProtKB-KW"/>
</dbReference>
<dbReference type="GO" id="GO:0019843">
    <property type="term" value="F:rRNA binding"/>
    <property type="evidence" value="ECO:0007669"/>
    <property type="project" value="UniProtKB-UniRule"/>
</dbReference>
<dbReference type="GO" id="GO:0003735">
    <property type="term" value="F:structural constituent of ribosome"/>
    <property type="evidence" value="ECO:0007669"/>
    <property type="project" value="InterPro"/>
</dbReference>
<dbReference type="GO" id="GO:0006412">
    <property type="term" value="P:translation"/>
    <property type="evidence" value="ECO:0007669"/>
    <property type="project" value="UniProtKB-UniRule"/>
</dbReference>
<dbReference type="FunFam" id="3.30.1490.10:FF:000001">
    <property type="entry name" value="30S ribosomal protein S8"/>
    <property type="match status" value="1"/>
</dbReference>
<dbReference type="Gene3D" id="3.30.1370.30">
    <property type="match status" value="1"/>
</dbReference>
<dbReference type="Gene3D" id="3.30.1490.10">
    <property type="match status" value="1"/>
</dbReference>
<dbReference type="HAMAP" id="MF_01302_B">
    <property type="entry name" value="Ribosomal_uS8_B"/>
    <property type="match status" value="1"/>
</dbReference>
<dbReference type="InterPro" id="IPR000630">
    <property type="entry name" value="Ribosomal_uS8"/>
</dbReference>
<dbReference type="InterPro" id="IPR047863">
    <property type="entry name" value="Ribosomal_uS8_CS"/>
</dbReference>
<dbReference type="InterPro" id="IPR035987">
    <property type="entry name" value="Ribosomal_uS8_sf"/>
</dbReference>
<dbReference type="NCBIfam" id="NF001109">
    <property type="entry name" value="PRK00136.1"/>
    <property type="match status" value="1"/>
</dbReference>
<dbReference type="PANTHER" id="PTHR11758">
    <property type="entry name" value="40S RIBOSOMAL PROTEIN S15A"/>
    <property type="match status" value="1"/>
</dbReference>
<dbReference type="Pfam" id="PF00410">
    <property type="entry name" value="Ribosomal_S8"/>
    <property type="match status" value="1"/>
</dbReference>
<dbReference type="SUPFAM" id="SSF56047">
    <property type="entry name" value="Ribosomal protein S8"/>
    <property type="match status" value="1"/>
</dbReference>
<dbReference type="PROSITE" id="PS00053">
    <property type="entry name" value="RIBOSOMAL_S8"/>
    <property type="match status" value="1"/>
</dbReference>
<name>RS8_BARQU</name>
<gene>
    <name evidence="1" type="primary">rpsH</name>
    <name type="ordered locus">BQ08090</name>
</gene>
<feature type="chain" id="PRO_0000126370" description="Small ribosomal subunit protein uS8">
    <location>
        <begin position="1"/>
        <end position="132"/>
    </location>
</feature>
<keyword id="KW-0687">Ribonucleoprotein</keyword>
<keyword id="KW-0689">Ribosomal protein</keyword>
<keyword id="KW-0694">RNA-binding</keyword>
<keyword id="KW-0699">rRNA-binding</keyword>